<gene>
    <name evidence="1" type="primary">mnmG</name>
    <name evidence="1" type="synonym">gidA</name>
    <name type="ordered locus">LEPBI_I3477</name>
</gene>
<organism>
    <name type="scientific">Leptospira biflexa serovar Patoc (strain Patoc 1 / ATCC 23582 / Paris)</name>
    <dbReference type="NCBI Taxonomy" id="456481"/>
    <lineage>
        <taxon>Bacteria</taxon>
        <taxon>Pseudomonadati</taxon>
        <taxon>Spirochaetota</taxon>
        <taxon>Spirochaetia</taxon>
        <taxon>Leptospirales</taxon>
        <taxon>Leptospiraceae</taxon>
        <taxon>Leptospira</taxon>
    </lineage>
</organism>
<keyword id="KW-0963">Cytoplasm</keyword>
<keyword id="KW-0274">FAD</keyword>
<keyword id="KW-0285">Flavoprotein</keyword>
<keyword id="KW-0520">NAD</keyword>
<keyword id="KW-1185">Reference proteome</keyword>
<keyword id="KW-0819">tRNA processing</keyword>
<name>MNMG_LEPBP</name>
<protein>
    <recommendedName>
        <fullName evidence="1">tRNA uridine 5-carboxymethylaminomethyl modification enzyme MnmG</fullName>
    </recommendedName>
    <alternativeName>
        <fullName evidence="1">Glucose-inhibited division protein A</fullName>
    </alternativeName>
</protein>
<proteinExistence type="inferred from homology"/>
<evidence type="ECO:0000255" key="1">
    <source>
        <dbReference type="HAMAP-Rule" id="MF_00129"/>
    </source>
</evidence>
<comment type="function">
    <text evidence="1">NAD-binding protein involved in the addition of a carboxymethylaminomethyl (cmnm) group at the wobble position (U34) of certain tRNAs, forming tRNA-cmnm(5)s(2)U34.</text>
</comment>
<comment type="cofactor">
    <cofactor evidence="1">
        <name>FAD</name>
        <dbReference type="ChEBI" id="CHEBI:57692"/>
    </cofactor>
</comment>
<comment type="subunit">
    <text evidence="1">Homodimer. Heterotetramer of two MnmE and two MnmG subunits.</text>
</comment>
<comment type="subcellular location">
    <subcellularLocation>
        <location evidence="1">Cytoplasm</location>
    </subcellularLocation>
</comment>
<comment type="similarity">
    <text evidence="1">Belongs to the MnmG family.</text>
</comment>
<accession>B0SS01</accession>
<reference key="1">
    <citation type="journal article" date="2008" name="PLoS ONE">
        <title>Genome sequence of the saprophyte Leptospira biflexa provides insights into the evolution of Leptospira and the pathogenesis of leptospirosis.</title>
        <authorList>
            <person name="Picardeau M."/>
            <person name="Bulach D.M."/>
            <person name="Bouchier C."/>
            <person name="Zuerner R.L."/>
            <person name="Zidane N."/>
            <person name="Wilson P.J."/>
            <person name="Creno S."/>
            <person name="Kuczek E.S."/>
            <person name="Bommezzadri S."/>
            <person name="Davis J.C."/>
            <person name="McGrath A."/>
            <person name="Johnson M.J."/>
            <person name="Boursaux-Eude C."/>
            <person name="Seemann T."/>
            <person name="Rouy Z."/>
            <person name="Coppel R.L."/>
            <person name="Rood J.I."/>
            <person name="Lajus A."/>
            <person name="Davies J.K."/>
            <person name="Medigue C."/>
            <person name="Adler B."/>
        </authorList>
    </citation>
    <scope>NUCLEOTIDE SEQUENCE [LARGE SCALE GENOMIC DNA]</scope>
    <source>
        <strain>Patoc 1 / ATCC 23582 / Paris</strain>
    </source>
</reference>
<dbReference type="EMBL" id="CP000786">
    <property type="protein sequence ID" value="ABZ99536.1"/>
    <property type="molecule type" value="Genomic_DNA"/>
</dbReference>
<dbReference type="RefSeq" id="WP_012390392.1">
    <property type="nucleotide sequence ID" value="NC_010602.1"/>
</dbReference>
<dbReference type="SMR" id="B0SS01"/>
<dbReference type="STRING" id="456481.LEPBI_I3477"/>
<dbReference type="KEGG" id="lbi:LEPBI_I3477"/>
<dbReference type="HOGENOM" id="CLU_007831_2_2_12"/>
<dbReference type="OrthoDB" id="9815560at2"/>
<dbReference type="BioCyc" id="LBIF456481:LEPBI_RS17060-MONOMER"/>
<dbReference type="Proteomes" id="UP000001847">
    <property type="component" value="Chromosome I"/>
</dbReference>
<dbReference type="GO" id="GO:0005829">
    <property type="term" value="C:cytosol"/>
    <property type="evidence" value="ECO:0007669"/>
    <property type="project" value="TreeGrafter"/>
</dbReference>
<dbReference type="GO" id="GO:0050660">
    <property type="term" value="F:flavin adenine dinucleotide binding"/>
    <property type="evidence" value="ECO:0007669"/>
    <property type="project" value="UniProtKB-UniRule"/>
</dbReference>
<dbReference type="GO" id="GO:0030488">
    <property type="term" value="P:tRNA methylation"/>
    <property type="evidence" value="ECO:0007669"/>
    <property type="project" value="TreeGrafter"/>
</dbReference>
<dbReference type="GO" id="GO:0002098">
    <property type="term" value="P:tRNA wobble uridine modification"/>
    <property type="evidence" value="ECO:0007669"/>
    <property type="project" value="InterPro"/>
</dbReference>
<dbReference type="FunFam" id="1.10.150.570:FF:000001">
    <property type="entry name" value="tRNA uridine 5-carboxymethylaminomethyl modification enzyme MnmG"/>
    <property type="match status" value="1"/>
</dbReference>
<dbReference type="FunFam" id="3.50.50.60:FF:000002">
    <property type="entry name" value="tRNA uridine 5-carboxymethylaminomethyl modification enzyme MnmG"/>
    <property type="match status" value="1"/>
</dbReference>
<dbReference type="FunFam" id="3.50.50.60:FF:000010">
    <property type="entry name" value="tRNA uridine 5-carboxymethylaminomethyl modification enzyme MnmG"/>
    <property type="match status" value="1"/>
</dbReference>
<dbReference type="Gene3D" id="3.50.50.60">
    <property type="entry name" value="FAD/NAD(P)-binding domain"/>
    <property type="match status" value="2"/>
</dbReference>
<dbReference type="Gene3D" id="1.10.150.570">
    <property type="entry name" value="GidA associated domain, C-terminal subdomain"/>
    <property type="match status" value="1"/>
</dbReference>
<dbReference type="Gene3D" id="1.10.10.1800">
    <property type="entry name" value="tRNA uridine 5-carboxymethylaminomethyl modification enzyme MnmG/GidA"/>
    <property type="match status" value="1"/>
</dbReference>
<dbReference type="HAMAP" id="MF_00129">
    <property type="entry name" value="MnmG_GidA"/>
    <property type="match status" value="1"/>
</dbReference>
<dbReference type="InterPro" id="IPR036188">
    <property type="entry name" value="FAD/NAD-bd_sf"/>
</dbReference>
<dbReference type="InterPro" id="IPR049312">
    <property type="entry name" value="GIDA_C_N"/>
</dbReference>
<dbReference type="InterPro" id="IPR004416">
    <property type="entry name" value="MnmG"/>
</dbReference>
<dbReference type="InterPro" id="IPR002218">
    <property type="entry name" value="MnmG-rel"/>
</dbReference>
<dbReference type="InterPro" id="IPR020595">
    <property type="entry name" value="MnmG-rel_CS"/>
</dbReference>
<dbReference type="InterPro" id="IPR026904">
    <property type="entry name" value="MnmG_C"/>
</dbReference>
<dbReference type="InterPro" id="IPR047001">
    <property type="entry name" value="MnmG_C_subdom"/>
</dbReference>
<dbReference type="InterPro" id="IPR044920">
    <property type="entry name" value="MnmG_C_subdom_sf"/>
</dbReference>
<dbReference type="InterPro" id="IPR040131">
    <property type="entry name" value="MnmG_N"/>
</dbReference>
<dbReference type="NCBIfam" id="TIGR00136">
    <property type="entry name" value="mnmG_gidA"/>
    <property type="match status" value="1"/>
</dbReference>
<dbReference type="PANTHER" id="PTHR11806">
    <property type="entry name" value="GLUCOSE INHIBITED DIVISION PROTEIN A"/>
    <property type="match status" value="1"/>
</dbReference>
<dbReference type="PANTHER" id="PTHR11806:SF0">
    <property type="entry name" value="PROTEIN MTO1 HOMOLOG, MITOCHONDRIAL"/>
    <property type="match status" value="1"/>
</dbReference>
<dbReference type="Pfam" id="PF01134">
    <property type="entry name" value="GIDA"/>
    <property type="match status" value="1"/>
</dbReference>
<dbReference type="Pfam" id="PF21680">
    <property type="entry name" value="GIDA_C_1st"/>
    <property type="match status" value="1"/>
</dbReference>
<dbReference type="Pfam" id="PF13932">
    <property type="entry name" value="SAM_GIDA_C"/>
    <property type="match status" value="1"/>
</dbReference>
<dbReference type="SMART" id="SM01228">
    <property type="entry name" value="GIDA_assoc_3"/>
    <property type="match status" value="1"/>
</dbReference>
<dbReference type="SUPFAM" id="SSF51905">
    <property type="entry name" value="FAD/NAD(P)-binding domain"/>
    <property type="match status" value="1"/>
</dbReference>
<dbReference type="PROSITE" id="PS01280">
    <property type="entry name" value="GIDA_1"/>
    <property type="match status" value="1"/>
</dbReference>
<feature type="chain" id="PRO_0000345289" description="tRNA uridine 5-carboxymethylaminomethyl modification enzyme MnmG">
    <location>
        <begin position="1"/>
        <end position="624"/>
    </location>
</feature>
<feature type="binding site" evidence="1">
    <location>
        <begin position="16"/>
        <end position="21"/>
    </location>
    <ligand>
        <name>FAD</name>
        <dbReference type="ChEBI" id="CHEBI:57692"/>
    </ligand>
</feature>
<feature type="binding site" evidence="1">
    <location>
        <position position="128"/>
    </location>
    <ligand>
        <name>FAD</name>
        <dbReference type="ChEBI" id="CHEBI:57692"/>
    </ligand>
</feature>
<feature type="binding site" evidence="1">
    <location>
        <position position="183"/>
    </location>
    <ligand>
        <name>FAD</name>
        <dbReference type="ChEBI" id="CHEBI:57692"/>
    </ligand>
</feature>
<feature type="binding site" evidence="1">
    <location>
        <begin position="275"/>
        <end position="289"/>
    </location>
    <ligand>
        <name>NAD(+)</name>
        <dbReference type="ChEBI" id="CHEBI:57540"/>
    </ligand>
</feature>
<feature type="binding site" evidence="1">
    <location>
        <position position="372"/>
    </location>
    <ligand>
        <name>FAD</name>
        <dbReference type="ChEBI" id="CHEBI:57692"/>
    </ligand>
</feature>
<sequence>MNPSFYPNQFDCIVVGAGHAGTEAAYISAKAGLKTLLITMNLDTIGQMSCNPAIGGIAKGHMVREVDALGGLMGRVIDQTGIQFKMLNTSKGPSVWAPRAQAEKKQYQLMIKHQLEKLQQLSIRQDTVEDLIVEGNQVTGVITGRGFTFYTNHVILTTGTFLSSVIHIGTYQKESGRIGEPTTKGLSHTLARFELRLGRLKTGTPARVHKNSINFDGLEIQDGDENPRPFSFSTKKIDRKQIPCFITYTNDTTHELIKQNLEYSPMYSGQIKSVGPRYCPSIEDKVVRFAERDRHQIFIEPEGYETNEMYLNGVSTSLPEEVQWKFLRSIKGLEQVELMRPGYAIEYDYVDPTELHPTLETKKVKGLYHAGQINGTTGYEEAAAQGLVAAYNVIRSVRKEEPILFKRSESYIGVLVDDLVYKGVEDPYRMFTSRAEYRLLLRQDNADQRLMQYGYEMGLVEESLYKDMKDRYARIESIKSHLFVSAMKPSPELTKVLEEKQITNYKFGHSLSSFLKRSDIKIKDLEPIVSELSILNEDEKAVLEMEVKYEGYLKRELETIEYRKKFLNFQIPIDFDYASVKGLKTEAIVKLEKHRPLNLENALHISGVDPSDVDLLLYHLVDRH</sequence>